<sequence length="365" mass="39171">MSWGQALRNYKPTGQQLFFSLTALLAAAVWGRDRQLDIGLFSPQSQLLALGLGFSLAAIAGYWVVPLLRRIKAGQFIREDGPQSHLQKAGTPTMGGIFAIPAGLLPALILAGRSPLVWALAFVTLAYATIGWLDDWQILRHRNNKGISPKLKLCLQFGAAFLFCLWLISQQGWQGTITTITLPFGWSLALSLLFWPLAVFTLVSESNATNLTDGLDGLAGGTGAAVLAGLGLWLAPQDPAIATFCCSLAGGFLGFLLHNRNPARVFMGDTGSLALGGAIAAIAIVANCLWVLLVMGGLFVLESISVILQVSYYKATKGPDGKGKRLLRMAPWHHHLELGGWSETQVVASFYGLTLLLIASCWLLN</sequence>
<keyword id="KW-0131">Cell cycle</keyword>
<keyword id="KW-0132">Cell division</keyword>
<keyword id="KW-0997">Cell inner membrane</keyword>
<keyword id="KW-1003">Cell membrane</keyword>
<keyword id="KW-0133">Cell shape</keyword>
<keyword id="KW-0961">Cell wall biogenesis/degradation</keyword>
<keyword id="KW-0460">Magnesium</keyword>
<keyword id="KW-0472">Membrane</keyword>
<keyword id="KW-0479">Metal-binding</keyword>
<keyword id="KW-0573">Peptidoglycan synthesis</keyword>
<keyword id="KW-1185">Reference proteome</keyword>
<keyword id="KW-0808">Transferase</keyword>
<keyword id="KW-0812">Transmembrane</keyword>
<keyword id="KW-1133">Transmembrane helix</keyword>
<organism>
    <name type="scientific">Synechococcus elongatus (strain ATCC 33912 / PCC 7942 / FACHB-805)</name>
    <name type="common">Anacystis nidulans R2</name>
    <dbReference type="NCBI Taxonomy" id="1140"/>
    <lineage>
        <taxon>Bacteria</taxon>
        <taxon>Bacillati</taxon>
        <taxon>Cyanobacteriota</taxon>
        <taxon>Cyanophyceae</taxon>
        <taxon>Synechococcales</taxon>
        <taxon>Synechococcaceae</taxon>
        <taxon>Synechococcus</taxon>
    </lineage>
</organism>
<protein>
    <recommendedName>
        <fullName evidence="1">Phospho-N-acetylmuramoyl-pentapeptide-transferase</fullName>
        <ecNumber evidence="1">2.7.8.13</ecNumber>
    </recommendedName>
    <alternativeName>
        <fullName evidence="1">UDP-MurNAc-pentapeptide phosphotransferase</fullName>
    </alternativeName>
</protein>
<dbReference type="EC" id="2.7.8.13" evidence="1"/>
<dbReference type="EMBL" id="CP000100">
    <property type="protein sequence ID" value="ABB56184.1"/>
    <property type="molecule type" value="Genomic_DNA"/>
</dbReference>
<dbReference type="RefSeq" id="WP_011377470.1">
    <property type="nucleotide sequence ID" value="NZ_CP130602.1"/>
</dbReference>
<dbReference type="SMR" id="Q31RY5"/>
<dbReference type="STRING" id="1140.Synpcc7942_0152"/>
<dbReference type="PaxDb" id="1140-Synpcc7942_0152"/>
<dbReference type="GeneID" id="72428964"/>
<dbReference type="KEGG" id="syf:Synpcc7942_0152"/>
<dbReference type="eggNOG" id="COG0472">
    <property type="taxonomic scope" value="Bacteria"/>
</dbReference>
<dbReference type="HOGENOM" id="CLU_023982_0_2_3"/>
<dbReference type="BioCyc" id="SYNEL:SYNPCC7942_0152-MONOMER"/>
<dbReference type="UniPathway" id="UPA00219"/>
<dbReference type="Proteomes" id="UP000889800">
    <property type="component" value="Chromosome"/>
</dbReference>
<dbReference type="GO" id="GO:0005886">
    <property type="term" value="C:plasma membrane"/>
    <property type="evidence" value="ECO:0007669"/>
    <property type="project" value="UniProtKB-SubCell"/>
</dbReference>
<dbReference type="GO" id="GO:0046872">
    <property type="term" value="F:metal ion binding"/>
    <property type="evidence" value="ECO:0007669"/>
    <property type="project" value="UniProtKB-KW"/>
</dbReference>
<dbReference type="GO" id="GO:0008963">
    <property type="term" value="F:phospho-N-acetylmuramoyl-pentapeptide-transferase activity"/>
    <property type="evidence" value="ECO:0007669"/>
    <property type="project" value="UniProtKB-UniRule"/>
</dbReference>
<dbReference type="GO" id="GO:0051992">
    <property type="term" value="F:UDP-N-acetylmuramoyl-L-alanyl-D-glutamyl-meso-2,6-diaminopimelyl-D-alanyl-D-alanine:undecaprenyl-phosphate transferase activity"/>
    <property type="evidence" value="ECO:0007669"/>
    <property type="project" value="RHEA"/>
</dbReference>
<dbReference type="GO" id="GO:0051301">
    <property type="term" value="P:cell division"/>
    <property type="evidence" value="ECO:0007669"/>
    <property type="project" value="UniProtKB-KW"/>
</dbReference>
<dbReference type="GO" id="GO:0071555">
    <property type="term" value="P:cell wall organization"/>
    <property type="evidence" value="ECO:0007669"/>
    <property type="project" value="UniProtKB-KW"/>
</dbReference>
<dbReference type="GO" id="GO:0009252">
    <property type="term" value="P:peptidoglycan biosynthetic process"/>
    <property type="evidence" value="ECO:0007669"/>
    <property type="project" value="UniProtKB-UniRule"/>
</dbReference>
<dbReference type="GO" id="GO:0008360">
    <property type="term" value="P:regulation of cell shape"/>
    <property type="evidence" value="ECO:0007669"/>
    <property type="project" value="UniProtKB-KW"/>
</dbReference>
<dbReference type="CDD" id="cd06852">
    <property type="entry name" value="GT_MraY"/>
    <property type="match status" value="1"/>
</dbReference>
<dbReference type="HAMAP" id="MF_00038">
    <property type="entry name" value="MraY"/>
    <property type="match status" value="1"/>
</dbReference>
<dbReference type="InterPro" id="IPR000715">
    <property type="entry name" value="Glycosyl_transferase_4"/>
</dbReference>
<dbReference type="InterPro" id="IPR003524">
    <property type="entry name" value="PNAcMuramoyl-5peptid_Trfase"/>
</dbReference>
<dbReference type="InterPro" id="IPR018480">
    <property type="entry name" value="PNAcMuramoyl-5peptid_Trfase_CS"/>
</dbReference>
<dbReference type="NCBIfam" id="TIGR00445">
    <property type="entry name" value="mraY"/>
    <property type="match status" value="1"/>
</dbReference>
<dbReference type="PANTHER" id="PTHR22926">
    <property type="entry name" value="PHOSPHO-N-ACETYLMURAMOYL-PENTAPEPTIDE-TRANSFERASE"/>
    <property type="match status" value="1"/>
</dbReference>
<dbReference type="PANTHER" id="PTHR22926:SF5">
    <property type="entry name" value="PHOSPHO-N-ACETYLMURAMOYL-PENTAPEPTIDE-TRANSFERASE HOMOLOG"/>
    <property type="match status" value="1"/>
</dbReference>
<dbReference type="Pfam" id="PF00953">
    <property type="entry name" value="Glycos_transf_4"/>
    <property type="match status" value="1"/>
</dbReference>
<dbReference type="Pfam" id="PF10555">
    <property type="entry name" value="MraY_sig1"/>
    <property type="match status" value="1"/>
</dbReference>
<dbReference type="PROSITE" id="PS01348">
    <property type="entry name" value="MRAY_2"/>
    <property type="match status" value="1"/>
</dbReference>
<accession>Q31RY5</accession>
<comment type="function">
    <text evidence="1">Catalyzes the initial step of the lipid cycle reactions in the biosynthesis of the cell wall peptidoglycan: transfers peptidoglycan precursor phospho-MurNAc-pentapeptide from UDP-MurNAc-pentapeptide onto the lipid carrier undecaprenyl phosphate, yielding undecaprenyl-pyrophosphoryl-MurNAc-pentapeptide, known as lipid I.</text>
</comment>
<comment type="catalytic activity">
    <reaction evidence="1">
        <text>UDP-N-acetyl-alpha-D-muramoyl-L-alanyl-gamma-D-glutamyl-meso-2,6-diaminopimeloyl-D-alanyl-D-alanine + di-trans,octa-cis-undecaprenyl phosphate = di-trans,octa-cis-undecaprenyl diphospho-N-acetyl-alpha-D-muramoyl-L-alanyl-D-glutamyl-meso-2,6-diaminopimeloyl-D-alanyl-D-alanine + UMP</text>
        <dbReference type="Rhea" id="RHEA:28386"/>
        <dbReference type="ChEBI" id="CHEBI:57865"/>
        <dbReference type="ChEBI" id="CHEBI:60392"/>
        <dbReference type="ChEBI" id="CHEBI:61386"/>
        <dbReference type="ChEBI" id="CHEBI:61387"/>
        <dbReference type="EC" id="2.7.8.13"/>
    </reaction>
</comment>
<comment type="cofactor">
    <cofactor evidence="1">
        <name>Mg(2+)</name>
        <dbReference type="ChEBI" id="CHEBI:18420"/>
    </cofactor>
</comment>
<comment type="pathway">
    <text evidence="1">Cell wall biogenesis; peptidoglycan biosynthesis.</text>
</comment>
<comment type="subcellular location">
    <subcellularLocation>
        <location evidence="1">Cell inner membrane</location>
        <topology evidence="1">Multi-pass membrane protein</topology>
    </subcellularLocation>
</comment>
<comment type="similarity">
    <text evidence="1">Belongs to the glycosyltransferase 4 family. MraY subfamily.</text>
</comment>
<name>MRAY_SYNE7</name>
<feature type="chain" id="PRO_0000235494" description="Phospho-N-acetylmuramoyl-pentapeptide-transferase">
    <location>
        <begin position="1"/>
        <end position="365"/>
    </location>
</feature>
<feature type="transmembrane region" description="Helical" evidence="1">
    <location>
        <begin position="47"/>
        <end position="67"/>
    </location>
</feature>
<feature type="transmembrane region" description="Helical" evidence="1">
    <location>
        <begin position="92"/>
        <end position="112"/>
    </location>
</feature>
<feature type="transmembrane region" description="Helical" evidence="1">
    <location>
        <begin position="114"/>
        <end position="134"/>
    </location>
</feature>
<feature type="transmembrane region" description="Helical" evidence="1">
    <location>
        <begin position="153"/>
        <end position="173"/>
    </location>
</feature>
<feature type="transmembrane region" description="Helical" evidence="1">
    <location>
        <begin position="180"/>
        <end position="200"/>
    </location>
</feature>
<feature type="transmembrane region" description="Helical" evidence="1">
    <location>
        <begin position="215"/>
        <end position="235"/>
    </location>
</feature>
<feature type="transmembrane region" description="Helical" evidence="1">
    <location>
        <begin position="239"/>
        <end position="259"/>
    </location>
</feature>
<feature type="transmembrane region" description="Helical" evidence="1">
    <location>
        <begin position="281"/>
        <end position="301"/>
    </location>
</feature>
<feature type="transmembrane region" description="Helical" evidence="1">
    <location>
        <begin position="344"/>
        <end position="364"/>
    </location>
</feature>
<evidence type="ECO:0000255" key="1">
    <source>
        <dbReference type="HAMAP-Rule" id="MF_00038"/>
    </source>
</evidence>
<reference key="1">
    <citation type="submission" date="2005-08" db="EMBL/GenBank/DDBJ databases">
        <title>Complete sequence of chromosome 1 of Synechococcus elongatus PCC 7942.</title>
        <authorList>
            <consortium name="US DOE Joint Genome Institute"/>
            <person name="Copeland A."/>
            <person name="Lucas S."/>
            <person name="Lapidus A."/>
            <person name="Barry K."/>
            <person name="Detter J.C."/>
            <person name="Glavina T."/>
            <person name="Hammon N."/>
            <person name="Israni S."/>
            <person name="Pitluck S."/>
            <person name="Schmutz J."/>
            <person name="Larimer F."/>
            <person name="Land M."/>
            <person name="Kyrpides N."/>
            <person name="Lykidis A."/>
            <person name="Golden S."/>
            <person name="Richardson P."/>
        </authorList>
    </citation>
    <scope>NUCLEOTIDE SEQUENCE [LARGE SCALE GENOMIC DNA]</scope>
    <source>
        <strain>ATCC 33912 / PCC 7942 / FACHB-805</strain>
    </source>
</reference>
<proteinExistence type="inferred from homology"/>
<gene>
    <name evidence="1" type="primary">mraY</name>
    <name type="ordered locus">Synpcc7942_0152</name>
</gene>